<sequence length="573" mass="61674">MAWGHRATVCLVLLGVGLGLVIVVLAAVLSPRQASCGPGAFTRAAVAADSKICSDIGRAILQQRGSPVDAAIAALVCTGVVNPQSMGLGGGVVFTIYNASTGKVEIINARETVPASYDQGLLNQCKNVLPLGTGAQWIGVPGELRGYAEAHRRHGRLPWAQLFQPTIALLREGFRVPFILSQFLNNSILRPHLSASTLRQLFFNGTETLRSQDPFPWPALANTLETVAKEGAEVLYTGRLGRMLVEDIAKQGSLLTVQDLAAFQPEVVEPLEMPLGNYTLYSPPPPAGGAILSFILNVLKGFNFSAETVARPGGEVNMYHHLVETLKFAVGQRWRLWDPSSHPGIQNISRDLLREDLAQRIRQQIDGRGDHHQLSHYNLTGVRGNRMGTSHVSVLGEDGSAVAATSTINTPFGAMVYSPRTGILLNNELLDLCWRHMPTSPITPPPVPGERPPSSMVPSILVNKGQGSKLVIGGAGGELIISAVAQTIMNKLWLGFDLTEAIASPILHVNSKGHVEYEPKFNQEVQKGLQDRGQIQSQSQRPVFLNAVQAVFQEGPCVYAASDLRKAGKASGY</sequence>
<comment type="function">
    <text evidence="2 4 5 6 7 8">Cleaves the gamma-glutamyl bond of extracellular glutathione tripeptide (gamma-Glu-Cys-Gly) and certain glutathione conjugates (PubMed:11463821, PubMed:12163373, PubMed:30842656, PubMed:9774450). Hydrolyzes glutathione releasing L-Glu and Cys-Gly dipeptide which is further metabolized to maintain extracellular cysteine levels but also to provide cysteine necessary for intracellular glutathione synthesis (By similarity). Among glutathione-S-conjugates metabolizes leukotriene C4 (LTC4) and S-geranylgeranyl-glutathione (GGG), but is inactive toward gamma-glutamyl leucine (PubMed:11463821, PubMed:12163373, PubMed:9774450). Converts extracellular LTC4 to LTD4 during acute inflammatory response (PubMed:11463821). Acts as a negative regulator of GGG bioactivity. GGT5 (via GGG catabolism) and ABCC1 (via extracellular transport) establish GGG gradients within lymphoid tissues to position P2RY8-positive lymphocytes at germinal centers in lymphoid follicles and restrict their chemotactic transmigration from blood vessels to bone marrow parenchyma (PubMed:30842656, PubMed:34088745). The transpeptidation reaction, i.e. the transfer of gamma-glutamyl moiety to an acceptor molecule to yield a new gamma-glutamyl compound requires high concentration of dipeptide acceptor and is considered nonphysiological (By similarity).</text>
</comment>
<comment type="catalytic activity">
    <reaction evidence="2">
        <text>glutathione + H2O = L-cysteinylglycine + L-glutamate</text>
        <dbReference type="Rhea" id="RHEA:28807"/>
        <dbReference type="ChEBI" id="CHEBI:15377"/>
        <dbReference type="ChEBI" id="CHEBI:29985"/>
        <dbReference type="ChEBI" id="CHEBI:57925"/>
        <dbReference type="ChEBI" id="CHEBI:61694"/>
        <dbReference type="EC" id="3.4.19.13"/>
    </reaction>
    <physiologicalReaction direction="left-to-right" evidence="2">
        <dbReference type="Rhea" id="RHEA:28808"/>
    </physiologicalReaction>
</comment>
<comment type="catalytic activity">
    <reaction evidence="4 5 6 8">
        <text>an S-substituted glutathione + H2O = an S-substituted L-cysteinylglycine + L-glutamate</text>
        <dbReference type="Rhea" id="RHEA:59468"/>
        <dbReference type="ChEBI" id="CHEBI:15377"/>
        <dbReference type="ChEBI" id="CHEBI:29985"/>
        <dbReference type="ChEBI" id="CHEBI:90779"/>
        <dbReference type="ChEBI" id="CHEBI:143103"/>
        <dbReference type="EC" id="3.4.19.13"/>
    </reaction>
    <physiologicalReaction direction="left-to-right" evidence="11 12 13 14">
        <dbReference type="Rhea" id="RHEA:59469"/>
    </physiologicalReaction>
</comment>
<comment type="catalytic activity">
    <reaction evidence="4 5 8">
        <text>leukotriene C4 + H2O = leukotriene D4 + L-glutamate</text>
        <dbReference type="Rhea" id="RHEA:31563"/>
        <dbReference type="ChEBI" id="CHEBI:15377"/>
        <dbReference type="ChEBI" id="CHEBI:29985"/>
        <dbReference type="ChEBI" id="CHEBI:57973"/>
        <dbReference type="ChEBI" id="CHEBI:63166"/>
        <dbReference type="EC" id="3.4.19.14"/>
    </reaction>
    <physiologicalReaction direction="left-to-right" evidence="4 5">
        <dbReference type="Rhea" id="RHEA:31564"/>
    </physiologicalReaction>
</comment>
<comment type="catalytic activity">
    <reaction evidence="6">
        <text>S-[(2E,6E,10E)-geranylgeranyl]-L-glutathione + H2O = S-[(2E,6E,10E)-geranylgeranyl]-L-cysteinylglycine + L-glutamate</text>
        <dbReference type="Rhea" id="RHEA:65120"/>
        <dbReference type="ChEBI" id="CHEBI:15377"/>
        <dbReference type="ChEBI" id="CHEBI:29985"/>
        <dbReference type="ChEBI" id="CHEBI:156326"/>
        <dbReference type="ChEBI" id="CHEBI:156330"/>
    </reaction>
    <physiologicalReaction direction="left-to-right" evidence="13">
        <dbReference type="Rhea" id="RHEA:65121"/>
    </physiologicalReaction>
</comment>
<comment type="catalytic activity">
    <reaction evidence="2">
        <text>an N-terminal (5-L-glutamyl)-[peptide] + an alpha-amino acid = 5-L-glutamyl amino acid + an N-terminal L-alpha-aminoacyl-[peptide]</text>
        <dbReference type="Rhea" id="RHEA:23904"/>
        <dbReference type="Rhea" id="RHEA-COMP:9780"/>
        <dbReference type="Rhea" id="RHEA-COMP:9795"/>
        <dbReference type="ChEBI" id="CHEBI:77644"/>
        <dbReference type="ChEBI" id="CHEBI:78597"/>
        <dbReference type="ChEBI" id="CHEBI:78599"/>
        <dbReference type="ChEBI" id="CHEBI:78608"/>
        <dbReference type="EC" id="2.3.2.2"/>
    </reaction>
    <physiologicalReaction direction="left-to-right" evidence="2">
        <dbReference type="Rhea" id="RHEA:23905"/>
    </physiologicalReaction>
</comment>
<comment type="activity regulation">
    <text evidence="2">Inhibited by serine-borate.</text>
</comment>
<comment type="pathway">
    <text evidence="4 5 8">Lipid metabolism; leukotriene D4 biosynthesis.</text>
</comment>
<comment type="pathway">
    <text evidence="2">Sulfur metabolism; glutathione metabolism.</text>
</comment>
<comment type="subunit">
    <text evidence="1 5">Heterodimer composed of the light and heavy chains (PubMed:12163373). The active site is located in the light chain (By similarity).</text>
</comment>
<comment type="subcellular location">
    <subcellularLocation>
        <location evidence="5">Membrane</location>
        <topology evidence="5">Single-pass type II membrane protein</topology>
    </subcellularLocation>
</comment>
<comment type="alternative products">
    <event type="alternative splicing"/>
    <isoform>
        <id>Q9Z2A9-1</id>
        <name>1</name>
        <sequence type="displayed"/>
    </isoform>
    <isoform>
        <id>Q9Z2A9-2</id>
        <name>2</name>
        <sequence type="described" ref="VSP_008147 VSP_008148"/>
    </isoform>
</comment>
<comment type="tissue specificity">
    <text evidence="5 8">Very low level of expression. Detected in spleen lymphocytes, medullary and paracortical thymic lymphocytes, lung interstitial cells, bronchial epithelium, proximal tubules in kidney, crypt cells in small intestine, neurons in brain stem and cerebral cortex and in Purkinje cells.</text>
</comment>
<comment type="tissue specificity">
    <molecule>Isoform 2</molecule>
    <text evidence="8">Very low expression.</text>
</comment>
<comment type="PTM">
    <text evidence="1">Cleaved by autocatalysis into a large and a small subunit.</text>
</comment>
<comment type="PTM">
    <text evidence="5">Glycosylated.</text>
</comment>
<comment type="disruption phenotype">
    <text evidence="4 5">Deficient mice shown no obvious phenotype but in most organs they have only 10% of the wild-type levels of gamma-glutamyl leukotrienase activity (PubMed:11463821). Mice deficient in GGT5 have significantly more airway hyper-reactivity in a model of experimental asthma (PubMed:12163373).</text>
</comment>
<comment type="miscellaneous">
    <text evidence="2 8">A previous study reported that GSH and oxidized glutathione (GSSG) are not substrates for murine GGT5 (PubMed:9774450). However, this result contrasts with two studies reported that GSH is indeed a substrate for GGT5 (By similarity).</text>
</comment>
<comment type="similarity">
    <text evidence="10">Belongs to the gamma-glutamyltransferase family.</text>
</comment>
<dbReference type="EC" id="3.4.19.13" evidence="2"/>
<dbReference type="EC" id="2.3.2.2" evidence="2"/>
<dbReference type="EC" id="3.4.19.14" evidence="4 5 8"/>
<dbReference type="EMBL" id="AF077765">
    <property type="protein sequence ID" value="AAC71001.1"/>
    <property type="molecule type" value="mRNA"/>
</dbReference>
<dbReference type="EMBL" id="AK052183">
    <property type="protein sequence ID" value="BAC34873.1"/>
    <property type="molecule type" value="mRNA"/>
</dbReference>
<dbReference type="EMBL" id="AK170326">
    <property type="protein sequence ID" value="BAE41720.1"/>
    <property type="molecule type" value="mRNA"/>
</dbReference>
<dbReference type="EMBL" id="AC087540">
    <property type="status" value="NOT_ANNOTATED_CDS"/>
    <property type="molecule type" value="Genomic_DNA"/>
</dbReference>
<dbReference type="EMBL" id="CH466553">
    <property type="protein sequence ID" value="EDL31901.1"/>
    <property type="molecule type" value="Genomic_DNA"/>
</dbReference>
<dbReference type="EMBL" id="BC113775">
    <property type="protein sequence ID" value="AAI13776.1"/>
    <property type="molecule type" value="mRNA"/>
</dbReference>
<dbReference type="CCDS" id="CCDS23928.1">
    <molecule id="Q9Z2A9-1"/>
</dbReference>
<dbReference type="RefSeq" id="NP_035950.2">
    <molecule id="Q9Z2A9-1"/>
    <property type="nucleotide sequence ID" value="NM_011820.4"/>
</dbReference>
<dbReference type="SMR" id="Q9Z2A9"/>
<dbReference type="FunCoup" id="Q9Z2A9">
    <property type="interactions" value="249"/>
</dbReference>
<dbReference type="STRING" id="10090.ENSMUSP00000072074"/>
<dbReference type="MEROPS" id="T03.002"/>
<dbReference type="GlyConnect" id="2331">
    <property type="glycosylation" value="1 N-Linked glycan (1 site)"/>
</dbReference>
<dbReference type="GlyCosmos" id="Q9Z2A9">
    <property type="glycosylation" value="7 sites, 1 glycan"/>
</dbReference>
<dbReference type="GlyGen" id="Q9Z2A9">
    <property type="glycosylation" value="8 sites, 7 N-linked glycans (6 sites)"/>
</dbReference>
<dbReference type="iPTMnet" id="Q9Z2A9"/>
<dbReference type="PhosphoSitePlus" id="Q9Z2A9"/>
<dbReference type="SwissPalm" id="Q9Z2A9"/>
<dbReference type="jPOST" id="Q9Z2A9"/>
<dbReference type="PaxDb" id="10090-ENSMUSP00000072074"/>
<dbReference type="PeptideAtlas" id="Q9Z2A9"/>
<dbReference type="ProteomicsDB" id="266803">
    <molecule id="Q9Z2A9-1"/>
</dbReference>
<dbReference type="ProteomicsDB" id="266804">
    <molecule id="Q9Z2A9-2"/>
</dbReference>
<dbReference type="Antibodypedia" id="285">
    <property type="antibodies" value="128 antibodies from 28 providers"/>
</dbReference>
<dbReference type="DNASU" id="23887"/>
<dbReference type="Ensembl" id="ENSMUST00000072217.9">
    <molecule id="Q9Z2A9-1"/>
    <property type="protein sequence ID" value="ENSMUSP00000072074.3"/>
    <property type="gene ID" value="ENSMUSG00000006344.18"/>
</dbReference>
<dbReference type="GeneID" id="23887"/>
<dbReference type="KEGG" id="mmu:23887"/>
<dbReference type="UCSC" id="uc007fqq.1">
    <molecule id="Q9Z2A9-1"/>
    <property type="organism name" value="mouse"/>
</dbReference>
<dbReference type="AGR" id="MGI:1346063"/>
<dbReference type="CTD" id="2687"/>
<dbReference type="MGI" id="MGI:1346063">
    <property type="gene designation" value="Ggt5"/>
</dbReference>
<dbReference type="VEuPathDB" id="HostDB:ENSMUSG00000006344"/>
<dbReference type="eggNOG" id="KOG2410">
    <property type="taxonomic scope" value="Eukaryota"/>
</dbReference>
<dbReference type="GeneTree" id="ENSGT00940000155794"/>
<dbReference type="HOGENOM" id="CLU_014813_4_1_1"/>
<dbReference type="InParanoid" id="Q9Z2A9"/>
<dbReference type="OMA" id="ICGMGPP"/>
<dbReference type="OrthoDB" id="1081007at2759"/>
<dbReference type="PhylomeDB" id="Q9Z2A9"/>
<dbReference type="TreeFam" id="TF313608"/>
<dbReference type="BRENDA" id="3.4.19.14">
    <property type="organism ID" value="3474"/>
</dbReference>
<dbReference type="Reactome" id="R-MMU-174403">
    <property type="pathway name" value="Glutathione synthesis and recycling"/>
</dbReference>
<dbReference type="Reactome" id="R-MMU-2142691">
    <property type="pathway name" value="Synthesis of Leukotrienes (LT) and Eoxins (EX)"/>
</dbReference>
<dbReference type="Reactome" id="R-MMU-5423646">
    <property type="pathway name" value="Aflatoxin activation and detoxification"/>
</dbReference>
<dbReference type="Reactome" id="R-MMU-9753281">
    <property type="pathway name" value="Paracetamol ADME"/>
</dbReference>
<dbReference type="SABIO-RK" id="Q9Z2A9"/>
<dbReference type="UniPathway" id="UPA00204"/>
<dbReference type="UniPathway" id="UPA00880"/>
<dbReference type="BioGRID-ORCS" id="23887">
    <property type="hits" value="3 hits in 79 CRISPR screens"/>
</dbReference>
<dbReference type="PRO" id="PR:Q9Z2A9"/>
<dbReference type="Proteomes" id="UP000000589">
    <property type="component" value="Chromosome 10"/>
</dbReference>
<dbReference type="RNAct" id="Q9Z2A9">
    <property type="molecule type" value="protein"/>
</dbReference>
<dbReference type="Bgee" id="ENSMUSG00000006344">
    <property type="expression patterns" value="Expressed in granulocyte and 84 other cell types or tissues"/>
</dbReference>
<dbReference type="ExpressionAtlas" id="Q9Z2A9">
    <property type="expression patterns" value="baseline and differential"/>
</dbReference>
<dbReference type="GO" id="GO:0005886">
    <property type="term" value="C:plasma membrane"/>
    <property type="evidence" value="ECO:0000314"/>
    <property type="project" value="MGI"/>
</dbReference>
<dbReference type="GO" id="GO:0036374">
    <property type="term" value="F:glutathione hydrolase activity"/>
    <property type="evidence" value="ECO:0007669"/>
    <property type="project" value="UniProtKB-EC"/>
</dbReference>
<dbReference type="GO" id="GO:0103068">
    <property type="term" value="F:leukotriene C4 gamma-glutamyl transferase activity"/>
    <property type="evidence" value="ECO:0007669"/>
    <property type="project" value="UniProtKB-EC"/>
</dbReference>
<dbReference type="GO" id="GO:0002951">
    <property type="term" value="F:leukotriene-C(4) hydrolase"/>
    <property type="evidence" value="ECO:0000315"/>
    <property type="project" value="UniProtKB"/>
</dbReference>
<dbReference type="GO" id="GO:0000048">
    <property type="term" value="F:peptidyltransferase activity"/>
    <property type="evidence" value="ECO:0007669"/>
    <property type="project" value="Ensembl"/>
</dbReference>
<dbReference type="GO" id="GO:0006520">
    <property type="term" value="P:amino acid metabolic process"/>
    <property type="evidence" value="ECO:0007669"/>
    <property type="project" value="Ensembl"/>
</dbReference>
<dbReference type="GO" id="GO:0006631">
    <property type="term" value="P:fatty acid metabolic process"/>
    <property type="evidence" value="ECO:0007669"/>
    <property type="project" value="Ensembl"/>
</dbReference>
<dbReference type="GO" id="GO:0006750">
    <property type="term" value="P:glutathione biosynthetic process"/>
    <property type="evidence" value="ECO:0007669"/>
    <property type="project" value="UniProtKB-KW"/>
</dbReference>
<dbReference type="GO" id="GO:0006751">
    <property type="term" value="P:glutathione catabolic process"/>
    <property type="evidence" value="ECO:0007669"/>
    <property type="project" value="Ensembl"/>
</dbReference>
<dbReference type="GO" id="GO:0006954">
    <property type="term" value="P:inflammatory response"/>
    <property type="evidence" value="ECO:0000315"/>
    <property type="project" value="MGI"/>
</dbReference>
<dbReference type="GO" id="GO:1901750">
    <property type="term" value="P:leukotriene D4 biosynthetic process"/>
    <property type="evidence" value="ECO:0000314"/>
    <property type="project" value="MGI"/>
</dbReference>
<dbReference type="GO" id="GO:0006508">
    <property type="term" value="P:proteolysis"/>
    <property type="evidence" value="ECO:0007669"/>
    <property type="project" value="UniProtKB-KW"/>
</dbReference>
<dbReference type="FunFam" id="1.10.246.130:FF:000001">
    <property type="entry name" value="Gamma-glutamyltransferase 5 isoform 1"/>
    <property type="match status" value="1"/>
</dbReference>
<dbReference type="FunFam" id="3.60.20.40:FF:000005">
    <property type="entry name" value="gamma-glutamyltransferase 5 isoform X3"/>
    <property type="match status" value="1"/>
</dbReference>
<dbReference type="Gene3D" id="1.10.246.130">
    <property type="match status" value="1"/>
</dbReference>
<dbReference type="Gene3D" id="3.60.20.40">
    <property type="match status" value="1"/>
</dbReference>
<dbReference type="InterPro" id="IPR055262">
    <property type="entry name" value="GGT_CS"/>
</dbReference>
<dbReference type="InterPro" id="IPR043138">
    <property type="entry name" value="GGT_lsub_C"/>
</dbReference>
<dbReference type="InterPro" id="IPR000101">
    <property type="entry name" value="GGT_peptidase"/>
</dbReference>
<dbReference type="InterPro" id="IPR043137">
    <property type="entry name" value="GGT_ssub"/>
</dbReference>
<dbReference type="InterPro" id="IPR029055">
    <property type="entry name" value="Ntn_hydrolases_N"/>
</dbReference>
<dbReference type="PANTHER" id="PTHR45027:SF2">
    <property type="entry name" value="GAMMA-GLUTAMYLTRANSFERASE 5"/>
    <property type="match status" value="1"/>
</dbReference>
<dbReference type="PANTHER" id="PTHR45027">
    <property type="entry name" value="PUTATIVE GLUTATHIONE HYDROLASE LIGHT CHAIN"/>
    <property type="match status" value="1"/>
</dbReference>
<dbReference type="Pfam" id="PF01019">
    <property type="entry name" value="G_glu_transpept"/>
    <property type="match status" value="1"/>
</dbReference>
<dbReference type="PRINTS" id="PR01210">
    <property type="entry name" value="GGTRANSPTASE"/>
</dbReference>
<dbReference type="SUPFAM" id="SSF56235">
    <property type="entry name" value="N-terminal nucleophile aminohydrolases (Ntn hydrolases)"/>
    <property type="match status" value="1"/>
</dbReference>
<dbReference type="PROSITE" id="PS00462">
    <property type="entry name" value="G_GLU_TRANSPEPTIDASE"/>
    <property type="match status" value="1"/>
</dbReference>
<keyword id="KW-0012">Acyltransferase</keyword>
<keyword id="KW-0025">Alternative splicing</keyword>
<keyword id="KW-0317">Glutathione biosynthesis</keyword>
<keyword id="KW-0325">Glycoprotein</keyword>
<keyword id="KW-0378">Hydrolase</keyword>
<keyword id="KW-0434">Leukotriene biosynthesis</keyword>
<keyword id="KW-0472">Membrane</keyword>
<keyword id="KW-0645">Protease</keyword>
<keyword id="KW-1185">Reference proteome</keyword>
<keyword id="KW-0735">Signal-anchor</keyword>
<keyword id="KW-0808">Transferase</keyword>
<keyword id="KW-0812">Transmembrane</keyword>
<keyword id="KW-1133">Transmembrane helix</keyword>
<keyword id="KW-0865">Zymogen</keyword>
<evidence type="ECO:0000250" key="1">
    <source>
        <dbReference type="UniProtKB" id="P19440"/>
    </source>
</evidence>
<evidence type="ECO:0000250" key="2">
    <source>
        <dbReference type="UniProtKB" id="P36269"/>
    </source>
</evidence>
<evidence type="ECO:0000255" key="3"/>
<evidence type="ECO:0000269" key="4">
    <source>
    </source>
</evidence>
<evidence type="ECO:0000269" key="5">
    <source>
    </source>
</evidence>
<evidence type="ECO:0000269" key="6">
    <source>
    </source>
</evidence>
<evidence type="ECO:0000269" key="7">
    <source>
    </source>
</evidence>
<evidence type="ECO:0000269" key="8">
    <source>
    </source>
</evidence>
<evidence type="ECO:0000303" key="9">
    <source>
    </source>
</evidence>
<evidence type="ECO:0000305" key="10"/>
<evidence type="ECO:0000305" key="11">
    <source>
    </source>
</evidence>
<evidence type="ECO:0000305" key="12">
    <source>
    </source>
</evidence>
<evidence type="ECO:0000305" key="13">
    <source>
    </source>
</evidence>
<evidence type="ECO:0000305" key="14">
    <source>
    </source>
</evidence>
<gene>
    <name type="primary">Ggt5</name>
    <name type="synonym">Ggtla1</name>
</gene>
<feature type="chain" id="PRO_0000011074" description="Glutathione hydrolase 5 heavy chain" evidence="1">
    <location>
        <begin position="1"/>
        <end position="388"/>
    </location>
</feature>
<feature type="chain" id="PRO_0000011075" description="Glutathione hydrolase 5 light chain" evidence="1">
    <location>
        <begin position="389"/>
        <end position="573"/>
    </location>
</feature>
<feature type="topological domain" description="Cytoplasmic" evidence="5">
    <location>
        <begin position="1"/>
        <end position="8"/>
    </location>
</feature>
<feature type="transmembrane region" description="Helical; Signal-anchor for type II membrane protein" evidence="5">
    <location>
        <begin position="9"/>
        <end position="29"/>
    </location>
</feature>
<feature type="topological domain" description="Extracellular" evidence="5">
    <location>
        <begin position="30"/>
        <end position="573"/>
    </location>
</feature>
<feature type="active site" description="Nucleophile" evidence="1">
    <location>
        <position position="389"/>
    </location>
</feature>
<feature type="binding site" evidence="1">
    <location>
        <position position="110"/>
    </location>
    <ligand>
        <name>L-glutamate</name>
        <dbReference type="ChEBI" id="CHEBI:29985"/>
    </ligand>
</feature>
<feature type="binding site" evidence="1">
    <location>
        <position position="407"/>
    </location>
    <ligand>
        <name>L-glutamate</name>
        <dbReference type="ChEBI" id="CHEBI:29985"/>
    </ligand>
</feature>
<feature type="binding site" evidence="1">
    <location>
        <position position="428"/>
    </location>
    <ligand>
        <name>L-glutamate</name>
        <dbReference type="ChEBI" id="CHEBI:29985"/>
    </ligand>
</feature>
<feature type="binding site" evidence="1">
    <location>
        <begin position="454"/>
        <end position="455"/>
    </location>
    <ligand>
        <name>L-glutamate</name>
        <dbReference type="ChEBI" id="CHEBI:29985"/>
    </ligand>
</feature>
<feature type="glycosylation site" description="N-linked (GlcNAc...) asparagine" evidence="3">
    <location>
        <position position="98"/>
    </location>
</feature>
<feature type="glycosylation site" description="N-linked (GlcNAc...) asparagine" evidence="3">
    <location>
        <position position="185"/>
    </location>
</feature>
<feature type="glycosylation site" description="N-linked (GlcNAc...) asparagine" evidence="3">
    <location>
        <position position="204"/>
    </location>
</feature>
<feature type="glycosylation site" description="N-linked (GlcNAc...) asparagine" evidence="3">
    <location>
        <position position="277"/>
    </location>
</feature>
<feature type="glycosylation site" description="N-linked (GlcNAc...) asparagine" evidence="3">
    <location>
        <position position="303"/>
    </location>
</feature>
<feature type="glycosylation site" description="N-linked (GlcNAc...) asparagine" evidence="3">
    <location>
        <position position="347"/>
    </location>
</feature>
<feature type="glycosylation site" description="N-linked (GlcNAc...) asparagine" evidence="3">
    <location>
        <position position="378"/>
    </location>
</feature>
<feature type="splice variant" id="VSP_008147" description="In isoform 2." evidence="9">
    <original>VPGERPPSSM</original>
    <variation>DYHEQAVAWL</variation>
    <location>
        <begin position="447"/>
        <end position="456"/>
    </location>
</feature>
<feature type="splice variant" id="VSP_008148" description="In isoform 2." evidence="9">
    <location>
        <begin position="457"/>
        <end position="573"/>
    </location>
</feature>
<feature type="sequence conflict" description="In Ref. 1; AAC71001." evidence="10" ref="1">
    <original>L</original>
    <variation>P</variation>
    <location>
        <position position="479"/>
    </location>
</feature>
<name>GGT5_MOUSE</name>
<proteinExistence type="evidence at protein level"/>
<organism>
    <name type="scientific">Mus musculus</name>
    <name type="common">Mouse</name>
    <dbReference type="NCBI Taxonomy" id="10090"/>
    <lineage>
        <taxon>Eukaryota</taxon>
        <taxon>Metazoa</taxon>
        <taxon>Chordata</taxon>
        <taxon>Craniata</taxon>
        <taxon>Vertebrata</taxon>
        <taxon>Euteleostomi</taxon>
        <taxon>Mammalia</taxon>
        <taxon>Eutheria</taxon>
        <taxon>Euarchontoglires</taxon>
        <taxon>Glires</taxon>
        <taxon>Rodentia</taxon>
        <taxon>Myomorpha</taxon>
        <taxon>Muroidea</taxon>
        <taxon>Muridae</taxon>
        <taxon>Murinae</taxon>
        <taxon>Mus</taxon>
        <taxon>Mus</taxon>
    </lineage>
</organism>
<protein>
    <recommendedName>
        <fullName>Glutathione hydrolase 5 proenzyme</fullName>
        <ecNumber evidence="2">3.4.19.13</ecNumber>
    </recommendedName>
    <alternativeName>
        <fullName evidence="9">Gamma-glutamyl leukotrienase</fullName>
        <shortName evidence="9">GGL</shortName>
    </alternativeName>
    <alternativeName>
        <fullName>Gamma-glutamyltransferase 5</fullName>
        <shortName>GGT 5</shortName>
        <ecNumber evidence="2">2.3.2.2</ecNumber>
    </alternativeName>
    <alternativeName>
        <fullName>Gamma-glutamyltransferase-like activity 1</fullName>
    </alternativeName>
    <alternativeName>
        <fullName>Gamma-glutamyltranspeptidase 5</fullName>
    </alternativeName>
    <alternativeName>
        <fullName>Leukotriene-C4 hydrolase</fullName>
        <ecNumber evidence="4 5 8">3.4.19.14</ecNumber>
    </alternativeName>
    <component>
        <recommendedName>
            <fullName>Glutathione hydrolase 5 heavy chain</fullName>
        </recommendedName>
    </component>
    <component>
        <recommendedName>
            <fullName>Glutathione hydrolase 5 light chain</fullName>
        </recommendedName>
    </component>
</protein>
<accession>Q9Z2A9</accession>
<accession>Q8C7B4</accession>
<reference key="1">
    <citation type="journal article" date="1998" name="J. Biol. Chem.">
        <title>Gamma-glutamyl leukotrienase, a gamma-glutamyl transpeptidase gene family member, is expressed primarily in spleen.</title>
        <authorList>
            <person name="Carter B.Z."/>
            <person name="Shi Z.-Z."/>
            <person name="Barrios R."/>
            <person name="Lieberman M.W."/>
        </authorList>
    </citation>
    <scope>NUCLEOTIDE SEQUENCE [MRNA] (ISOFORMS 1 AND 2)</scope>
    <scope>TISSUE SPECIFICITY</scope>
    <scope>CATALYTIC ACTIVITY</scope>
    <scope>FUNCTION</scope>
    <source>
        <strain>C57BL/6 X 129</strain>
        <tissue>Spleen</tissue>
    </source>
</reference>
<reference key="2">
    <citation type="journal article" date="2005" name="Science">
        <title>The transcriptional landscape of the mammalian genome.</title>
        <authorList>
            <person name="Carninci P."/>
            <person name="Kasukawa T."/>
            <person name="Katayama S."/>
            <person name="Gough J."/>
            <person name="Frith M.C."/>
            <person name="Maeda N."/>
            <person name="Oyama R."/>
            <person name="Ravasi T."/>
            <person name="Lenhard B."/>
            <person name="Wells C."/>
            <person name="Kodzius R."/>
            <person name="Shimokawa K."/>
            <person name="Bajic V.B."/>
            <person name="Brenner S.E."/>
            <person name="Batalov S."/>
            <person name="Forrest A.R."/>
            <person name="Zavolan M."/>
            <person name="Davis M.J."/>
            <person name="Wilming L.G."/>
            <person name="Aidinis V."/>
            <person name="Allen J.E."/>
            <person name="Ambesi-Impiombato A."/>
            <person name="Apweiler R."/>
            <person name="Aturaliya R.N."/>
            <person name="Bailey T.L."/>
            <person name="Bansal M."/>
            <person name="Baxter L."/>
            <person name="Beisel K.W."/>
            <person name="Bersano T."/>
            <person name="Bono H."/>
            <person name="Chalk A.M."/>
            <person name="Chiu K.P."/>
            <person name="Choudhary V."/>
            <person name="Christoffels A."/>
            <person name="Clutterbuck D.R."/>
            <person name="Crowe M.L."/>
            <person name="Dalla E."/>
            <person name="Dalrymple B.P."/>
            <person name="de Bono B."/>
            <person name="Della Gatta G."/>
            <person name="di Bernardo D."/>
            <person name="Down T."/>
            <person name="Engstrom P."/>
            <person name="Fagiolini M."/>
            <person name="Faulkner G."/>
            <person name="Fletcher C.F."/>
            <person name="Fukushima T."/>
            <person name="Furuno M."/>
            <person name="Futaki S."/>
            <person name="Gariboldi M."/>
            <person name="Georgii-Hemming P."/>
            <person name="Gingeras T.R."/>
            <person name="Gojobori T."/>
            <person name="Green R.E."/>
            <person name="Gustincich S."/>
            <person name="Harbers M."/>
            <person name="Hayashi Y."/>
            <person name="Hensch T.K."/>
            <person name="Hirokawa N."/>
            <person name="Hill D."/>
            <person name="Huminiecki L."/>
            <person name="Iacono M."/>
            <person name="Ikeo K."/>
            <person name="Iwama A."/>
            <person name="Ishikawa T."/>
            <person name="Jakt M."/>
            <person name="Kanapin A."/>
            <person name="Katoh M."/>
            <person name="Kawasawa Y."/>
            <person name="Kelso J."/>
            <person name="Kitamura H."/>
            <person name="Kitano H."/>
            <person name="Kollias G."/>
            <person name="Krishnan S.P."/>
            <person name="Kruger A."/>
            <person name="Kummerfeld S.K."/>
            <person name="Kurochkin I.V."/>
            <person name="Lareau L.F."/>
            <person name="Lazarevic D."/>
            <person name="Lipovich L."/>
            <person name="Liu J."/>
            <person name="Liuni S."/>
            <person name="McWilliam S."/>
            <person name="Madan Babu M."/>
            <person name="Madera M."/>
            <person name="Marchionni L."/>
            <person name="Matsuda H."/>
            <person name="Matsuzawa S."/>
            <person name="Miki H."/>
            <person name="Mignone F."/>
            <person name="Miyake S."/>
            <person name="Morris K."/>
            <person name="Mottagui-Tabar S."/>
            <person name="Mulder N."/>
            <person name="Nakano N."/>
            <person name="Nakauchi H."/>
            <person name="Ng P."/>
            <person name="Nilsson R."/>
            <person name="Nishiguchi S."/>
            <person name="Nishikawa S."/>
            <person name="Nori F."/>
            <person name="Ohara O."/>
            <person name="Okazaki Y."/>
            <person name="Orlando V."/>
            <person name="Pang K.C."/>
            <person name="Pavan W.J."/>
            <person name="Pavesi G."/>
            <person name="Pesole G."/>
            <person name="Petrovsky N."/>
            <person name="Piazza S."/>
            <person name="Reed J."/>
            <person name="Reid J.F."/>
            <person name="Ring B.Z."/>
            <person name="Ringwald M."/>
            <person name="Rost B."/>
            <person name="Ruan Y."/>
            <person name="Salzberg S.L."/>
            <person name="Sandelin A."/>
            <person name="Schneider C."/>
            <person name="Schoenbach C."/>
            <person name="Sekiguchi K."/>
            <person name="Semple C.A."/>
            <person name="Seno S."/>
            <person name="Sessa L."/>
            <person name="Sheng Y."/>
            <person name="Shibata Y."/>
            <person name="Shimada H."/>
            <person name="Shimada K."/>
            <person name="Silva D."/>
            <person name="Sinclair B."/>
            <person name="Sperling S."/>
            <person name="Stupka E."/>
            <person name="Sugiura K."/>
            <person name="Sultana R."/>
            <person name="Takenaka Y."/>
            <person name="Taki K."/>
            <person name="Tammoja K."/>
            <person name="Tan S.L."/>
            <person name="Tang S."/>
            <person name="Taylor M.S."/>
            <person name="Tegner J."/>
            <person name="Teichmann S.A."/>
            <person name="Ueda H.R."/>
            <person name="van Nimwegen E."/>
            <person name="Verardo R."/>
            <person name="Wei C.L."/>
            <person name="Yagi K."/>
            <person name="Yamanishi H."/>
            <person name="Zabarovsky E."/>
            <person name="Zhu S."/>
            <person name="Zimmer A."/>
            <person name="Hide W."/>
            <person name="Bult C."/>
            <person name="Grimmond S.M."/>
            <person name="Teasdale R.D."/>
            <person name="Liu E.T."/>
            <person name="Brusic V."/>
            <person name="Quackenbush J."/>
            <person name="Wahlestedt C."/>
            <person name="Mattick J.S."/>
            <person name="Hume D.A."/>
            <person name="Kai C."/>
            <person name="Sasaki D."/>
            <person name="Tomaru Y."/>
            <person name="Fukuda S."/>
            <person name="Kanamori-Katayama M."/>
            <person name="Suzuki M."/>
            <person name="Aoki J."/>
            <person name="Arakawa T."/>
            <person name="Iida J."/>
            <person name="Imamura K."/>
            <person name="Itoh M."/>
            <person name="Kato T."/>
            <person name="Kawaji H."/>
            <person name="Kawagashira N."/>
            <person name="Kawashima T."/>
            <person name="Kojima M."/>
            <person name="Kondo S."/>
            <person name="Konno H."/>
            <person name="Nakano K."/>
            <person name="Ninomiya N."/>
            <person name="Nishio T."/>
            <person name="Okada M."/>
            <person name="Plessy C."/>
            <person name="Shibata K."/>
            <person name="Shiraki T."/>
            <person name="Suzuki S."/>
            <person name="Tagami M."/>
            <person name="Waki K."/>
            <person name="Watahiki A."/>
            <person name="Okamura-Oho Y."/>
            <person name="Suzuki H."/>
            <person name="Kawai J."/>
            <person name="Hayashizaki Y."/>
        </authorList>
    </citation>
    <scope>NUCLEOTIDE SEQUENCE [LARGE SCALE MRNA]</scope>
    <source>
        <strain>C57BL/6J</strain>
        <strain>NOD</strain>
        <tissue>Heart</tissue>
    </source>
</reference>
<reference key="3">
    <citation type="journal article" date="2009" name="PLoS Biol.">
        <title>Lineage-specific biology revealed by a finished genome assembly of the mouse.</title>
        <authorList>
            <person name="Church D.M."/>
            <person name="Goodstadt L."/>
            <person name="Hillier L.W."/>
            <person name="Zody M.C."/>
            <person name="Goldstein S."/>
            <person name="She X."/>
            <person name="Bult C.J."/>
            <person name="Agarwala R."/>
            <person name="Cherry J.L."/>
            <person name="DiCuccio M."/>
            <person name="Hlavina W."/>
            <person name="Kapustin Y."/>
            <person name="Meric P."/>
            <person name="Maglott D."/>
            <person name="Birtle Z."/>
            <person name="Marques A.C."/>
            <person name="Graves T."/>
            <person name="Zhou S."/>
            <person name="Teague B."/>
            <person name="Potamousis K."/>
            <person name="Churas C."/>
            <person name="Place M."/>
            <person name="Herschleb J."/>
            <person name="Runnheim R."/>
            <person name="Forrest D."/>
            <person name="Amos-Landgraf J."/>
            <person name="Schwartz D.C."/>
            <person name="Cheng Z."/>
            <person name="Lindblad-Toh K."/>
            <person name="Eichler E.E."/>
            <person name="Ponting C.P."/>
        </authorList>
    </citation>
    <scope>NUCLEOTIDE SEQUENCE [LARGE SCALE GENOMIC DNA]</scope>
    <source>
        <strain>C57BL/6J</strain>
    </source>
</reference>
<reference key="4">
    <citation type="submission" date="2005-07" db="EMBL/GenBank/DDBJ databases">
        <authorList>
            <person name="Mural R.J."/>
            <person name="Adams M.D."/>
            <person name="Myers E.W."/>
            <person name="Smith H.O."/>
            <person name="Venter J.C."/>
        </authorList>
    </citation>
    <scope>NUCLEOTIDE SEQUENCE [LARGE SCALE GENOMIC DNA]</scope>
</reference>
<reference key="5">
    <citation type="journal article" date="2004" name="Genome Res.">
        <title>The status, quality, and expansion of the NIH full-length cDNA project: the Mammalian Gene Collection (MGC).</title>
        <authorList>
            <consortium name="The MGC Project Team"/>
        </authorList>
    </citation>
    <scope>NUCLEOTIDE SEQUENCE [LARGE SCALE MRNA]</scope>
</reference>
<reference key="6">
    <citation type="journal article" date="2010" name="Cell">
        <title>A tissue-specific atlas of mouse protein phosphorylation and expression.</title>
        <authorList>
            <person name="Huttlin E.L."/>
            <person name="Jedrychowski M.P."/>
            <person name="Elias J.E."/>
            <person name="Goswami T."/>
            <person name="Rad R."/>
            <person name="Beausoleil S.A."/>
            <person name="Villen J."/>
            <person name="Haas W."/>
            <person name="Sowa M.E."/>
            <person name="Gygi S.P."/>
        </authorList>
    </citation>
    <scope>IDENTIFICATION BY MASS SPECTROMETRY [LARGE SCALE ANALYSIS]</scope>
    <source>
        <tissue>Heart</tissue>
        <tissue>Kidney</tissue>
        <tissue>Spleen</tissue>
        <tissue>Testis</tissue>
    </source>
</reference>
<reference key="7">
    <citation type="journal article" date="2001" name="Mol. Cell. Biol.">
        <title>Disruption of gamma-glutamyl leukotrienase results in disruption of leukotriene D(4) synthesis in vivo and attenuation of the acute inflammatory response.</title>
        <authorList>
            <person name="Shi Z.Z."/>
            <person name="Han B."/>
            <person name="Habib G.M."/>
            <person name="Matzuk M.M."/>
            <person name="Lieberman M.W."/>
        </authorList>
    </citation>
    <scope>DISRUPTION PHENOTYPE</scope>
    <scope>CATALYTIC ACTIVITY</scope>
    <scope>FUNCTION</scope>
</reference>
<reference key="8">
    <citation type="journal article" date="2002" name="Am. J. Pathol.">
        <title>Gamma-glutamyl leukotrienase, a novel endothelial membrane protein, is specifically responsible for leukotriene D(4) formation in vivo.</title>
        <authorList>
            <person name="Han B."/>
            <person name="Luo G."/>
            <person name="Shi Z.Z."/>
            <person name="Barrios R."/>
            <person name="Atwood D."/>
            <person name="Liu W."/>
            <person name="Habib G.M."/>
            <person name="Sifers R.N."/>
            <person name="Corry D.B."/>
            <person name="Lieberman M.W."/>
        </authorList>
    </citation>
    <scope>CATALYTIC ACTIVITY</scope>
    <scope>FUNCTION</scope>
    <scope>SUBCELLULAR LOCATION</scope>
    <scope>SUBUNIT</scope>
    <scope>TISSUE SPECIFICITY</scope>
    <scope>DISRUPTION PHENOTYPE</scope>
    <scope>GLYCOSYLATION</scope>
</reference>
<reference key="9">
    <citation type="journal article" date="2019" name="Nature">
        <title>S-Geranylgeranyl-L-glutathione is a ligand for human B cell-confinement receptor P2RY8.</title>
        <authorList>
            <person name="Lu E."/>
            <person name="Wolfreys F.D."/>
            <person name="Muppidi J.R."/>
            <person name="Xu Y."/>
            <person name="Cyster J.G."/>
        </authorList>
    </citation>
    <scope>FUNCTION</scope>
    <scope>CATALYTIC ACTIVITY</scope>
</reference>
<reference key="10">
    <citation type="journal article" date="2021" name="Sci. Immunol.">
        <title>Abcc1 and Ggt5 support lymphocyte guidance through export and catabolism of S-geranylgeranyl-l-glutathione.</title>
        <authorList>
            <person name="Gallman A.E."/>
            <person name="Wolfreys F.D."/>
            <person name="Nguyen D.N."/>
            <person name="Sandy M."/>
            <person name="Xu Y."/>
            <person name="An J."/>
            <person name="Li Z."/>
            <person name="Marson A."/>
            <person name="Lu E."/>
            <person name="Cyster J.G."/>
        </authorList>
    </citation>
    <scope>FUNCTION</scope>
</reference>